<reference key="1">
    <citation type="submission" date="2006-12" db="EMBL/GenBank/DDBJ databases">
        <authorList>
            <person name="Fouts D.E."/>
            <person name="Nelson K.E."/>
            <person name="Sebastian Y."/>
        </authorList>
    </citation>
    <scope>NUCLEOTIDE SEQUENCE [LARGE SCALE GENOMIC DNA]</scope>
    <source>
        <strain>81-176</strain>
    </source>
</reference>
<feature type="chain" id="PRO_1000010496" description="Acetylglutamate kinase">
    <location>
        <begin position="1"/>
        <end position="279"/>
    </location>
</feature>
<feature type="binding site" evidence="1">
    <location>
        <begin position="64"/>
        <end position="65"/>
    </location>
    <ligand>
        <name>substrate</name>
    </ligand>
</feature>
<feature type="binding site" evidence="1">
    <location>
        <position position="86"/>
    </location>
    <ligand>
        <name>substrate</name>
    </ligand>
</feature>
<feature type="binding site" evidence="1">
    <location>
        <position position="177"/>
    </location>
    <ligand>
        <name>substrate</name>
    </ligand>
</feature>
<feature type="site" description="Transition state stabilizer" evidence="1">
    <location>
        <position position="29"/>
    </location>
</feature>
<feature type="site" description="Transition state stabilizer" evidence="1">
    <location>
        <position position="238"/>
    </location>
</feature>
<accession>A1VXU8</accession>
<protein>
    <recommendedName>
        <fullName evidence="1">Acetylglutamate kinase</fullName>
        <ecNumber evidence="1">2.7.2.8</ecNumber>
    </recommendedName>
    <alternativeName>
        <fullName evidence="1">N-acetyl-L-glutamate 5-phosphotransferase</fullName>
    </alternativeName>
    <alternativeName>
        <fullName evidence="1">NAG kinase</fullName>
        <shortName evidence="1">NAGK</shortName>
    </alternativeName>
</protein>
<dbReference type="EC" id="2.7.2.8" evidence="1"/>
<dbReference type="EMBL" id="CP000538">
    <property type="protein sequence ID" value="EAQ73446.1"/>
    <property type="molecule type" value="Genomic_DNA"/>
</dbReference>
<dbReference type="SMR" id="A1VXU8"/>
<dbReference type="KEGG" id="cjj:CJJ81176_0251"/>
<dbReference type="eggNOG" id="COG0548">
    <property type="taxonomic scope" value="Bacteria"/>
</dbReference>
<dbReference type="HOGENOM" id="CLU_053680_0_0_7"/>
<dbReference type="UniPathway" id="UPA00068">
    <property type="reaction ID" value="UER00107"/>
</dbReference>
<dbReference type="Proteomes" id="UP000000646">
    <property type="component" value="Chromosome"/>
</dbReference>
<dbReference type="GO" id="GO:0005737">
    <property type="term" value="C:cytoplasm"/>
    <property type="evidence" value="ECO:0007669"/>
    <property type="project" value="UniProtKB-SubCell"/>
</dbReference>
<dbReference type="GO" id="GO:0003991">
    <property type="term" value="F:acetylglutamate kinase activity"/>
    <property type="evidence" value="ECO:0007669"/>
    <property type="project" value="UniProtKB-UniRule"/>
</dbReference>
<dbReference type="GO" id="GO:0005524">
    <property type="term" value="F:ATP binding"/>
    <property type="evidence" value="ECO:0007669"/>
    <property type="project" value="UniProtKB-UniRule"/>
</dbReference>
<dbReference type="GO" id="GO:0042450">
    <property type="term" value="P:arginine biosynthetic process via ornithine"/>
    <property type="evidence" value="ECO:0007669"/>
    <property type="project" value="UniProtKB-UniRule"/>
</dbReference>
<dbReference type="GO" id="GO:0006526">
    <property type="term" value="P:L-arginine biosynthetic process"/>
    <property type="evidence" value="ECO:0007669"/>
    <property type="project" value="UniProtKB-UniPathway"/>
</dbReference>
<dbReference type="CDD" id="cd04250">
    <property type="entry name" value="AAK_NAGK-C"/>
    <property type="match status" value="1"/>
</dbReference>
<dbReference type="FunFam" id="3.40.1160.10:FF:000004">
    <property type="entry name" value="Acetylglutamate kinase"/>
    <property type="match status" value="1"/>
</dbReference>
<dbReference type="Gene3D" id="3.40.1160.10">
    <property type="entry name" value="Acetylglutamate kinase-like"/>
    <property type="match status" value="1"/>
</dbReference>
<dbReference type="HAMAP" id="MF_00082">
    <property type="entry name" value="ArgB"/>
    <property type="match status" value="1"/>
</dbReference>
<dbReference type="InterPro" id="IPR036393">
    <property type="entry name" value="AceGlu_kinase-like_sf"/>
</dbReference>
<dbReference type="InterPro" id="IPR004662">
    <property type="entry name" value="AcgluKinase_fam"/>
</dbReference>
<dbReference type="InterPro" id="IPR037528">
    <property type="entry name" value="ArgB"/>
</dbReference>
<dbReference type="InterPro" id="IPR001048">
    <property type="entry name" value="Asp/Glu/Uridylate_kinase"/>
</dbReference>
<dbReference type="InterPro" id="IPR001057">
    <property type="entry name" value="Glu/AcGlu_kinase"/>
</dbReference>
<dbReference type="InterPro" id="IPR041727">
    <property type="entry name" value="NAGK-C"/>
</dbReference>
<dbReference type="NCBIfam" id="TIGR00761">
    <property type="entry name" value="argB"/>
    <property type="match status" value="1"/>
</dbReference>
<dbReference type="PANTHER" id="PTHR23342">
    <property type="entry name" value="N-ACETYLGLUTAMATE SYNTHASE"/>
    <property type="match status" value="1"/>
</dbReference>
<dbReference type="PANTHER" id="PTHR23342:SF0">
    <property type="entry name" value="N-ACETYLGLUTAMATE SYNTHASE, MITOCHONDRIAL"/>
    <property type="match status" value="1"/>
</dbReference>
<dbReference type="Pfam" id="PF00696">
    <property type="entry name" value="AA_kinase"/>
    <property type="match status" value="1"/>
</dbReference>
<dbReference type="PIRSF" id="PIRSF000728">
    <property type="entry name" value="NAGK"/>
    <property type="match status" value="1"/>
</dbReference>
<dbReference type="PRINTS" id="PR00474">
    <property type="entry name" value="GLU5KINASE"/>
</dbReference>
<dbReference type="SUPFAM" id="SSF53633">
    <property type="entry name" value="Carbamate kinase-like"/>
    <property type="match status" value="1"/>
</dbReference>
<evidence type="ECO:0000255" key="1">
    <source>
        <dbReference type="HAMAP-Rule" id="MF_00082"/>
    </source>
</evidence>
<organism>
    <name type="scientific">Campylobacter jejuni subsp. jejuni serotype O:23/36 (strain 81-176)</name>
    <dbReference type="NCBI Taxonomy" id="354242"/>
    <lineage>
        <taxon>Bacteria</taxon>
        <taxon>Pseudomonadati</taxon>
        <taxon>Campylobacterota</taxon>
        <taxon>Epsilonproteobacteria</taxon>
        <taxon>Campylobacterales</taxon>
        <taxon>Campylobacteraceae</taxon>
        <taxon>Campylobacter</taxon>
    </lineage>
</organism>
<keyword id="KW-0028">Amino-acid biosynthesis</keyword>
<keyword id="KW-0055">Arginine biosynthesis</keyword>
<keyword id="KW-0067">ATP-binding</keyword>
<keyword id="KW-0963">Cytoplasm</keyword>
<keyword id="KW-0418">Kinase</keyword>
<keyword id="KW-0547">Nucleotide-binding</keyword>
<keyword id="KW-0808">Transferase</keyword>
<name>ARGB_CAMJJ</name>
<gene>
    <name evidence="1" type="primary">argB</name>
    <name type="ordered locus">CJJ81176_0251</name>
</gene>
<proteinExistence type="inferred from homology"/>
<comment type="function">
    <text evidence="1">Catalyzes the ATP-dependent phosphorylation of N-acetyl-L-glutamate.</text>
</comment>
<comment type="catalytic activity">
    <reaction evidence="1">
        <text>N-acetyl-L-glutamate + ATP = N-acetyl-L-glutamyl 5-phosphate + ADP</text>
        <dbReference type="Rhea" id="RHEA:14629"/>
        <dbReference type="ChEBI" id="CHEBI:30616"/>
        <dbReference type="ChEBI" id="CHEBI:44337"/>
        <dbReference type="ChEBI" id="CHEBI:57936"/>
        <dbReference type="ChEBI" id="CHEBI:456216"/>
        <dbReference type="EC" id="2.7.2.8"/>
    </reaction>
</comment>
<comment type="pathway">
    <text evidence="1">Amino-acid biosynthesis; L-arginine biosynthesis; N(2)-acetyl-L-ornithine from L-glutamate: step 2/4.</text>
</comment>
<comment type="subcellular location">
    <subcellularLocation>
        <location evidence="1">Cytoplasm</location>
    </subcellularLocation>
</comment>
<comment type="similarity">
    <text evidence="1">Belongs to the acetylglutamate kinase family. ArgB subfamily.</text>
</comment>
<sequence>MQKYLEKANVLIEALPYIRKFNSKIILIKYGGSAMENEELKHCVMQDIALLKLVGLKPIIVHGGGKDISAMCEKLGVKSEFKNGLRVSDKATTEVASMVLNHINKNLVHSLQNLGVKAIGLCGKDGALLECVKKDENLAFVGTIQKVNSKILEELLEKDFLPIIAPIGMDENFNTYNINADDAACAIAKALRAEKLAFLTDTAGLYEDFNDKNSLISKISLEQAKILAPKIEGGMHVKLKSCIDACENGVKKVHILDGRVKHSLLLEFFTDEGIGTLVG</sequence>